<reference key="1">
    <citation type="journal article" date="2004" name="Nat. Biotechnol.">
        <title>The genome sequence of the extreme thermophile Thermus thermophilus.</title>
        <authorList>
            <person name="Henne A."/>
            <person name="Brueggemann H."/>
            <person name="Raasch C."/>
            <person name="Wiezer A."/>
            <person name="Hartsch T."/>
            <person name="Liesegang H."/>
            <person name="Johann A."/>
            <person name="Lienard T."/>
            <person name="Gohl O."/>
            <person name="Martinez-Arias R."/>
            <person name="Jacobi C."/>
            <person name="Starkuviene V."/>
            <person name="Schlenczeck S."/>
            <person name="Dencker S."/>
            <person name="Huber R."/>
            <person name="Klenk H.-P."/>
            <person name="Kramer W."/>
            <person name="Merkl R."/>
            <person name="Gottschalk G."/>
            <person name="Fritz H.-J."/>
        </authorList>
    </citation>
    <scope>NUCLEOTIDE SEQUENCE [LARGE SCALE GENOMIC DNA]</scope>
    <source>
        <strain>ATCC BAA-163 / DSM 7039 / HB27</strain>
    </source>
</reference>
<organism>
    <name type="scientific">Thermus thermophilus (strain ATCC BAA-163 / DSM 7039 / HB27)</name>
    <dbReference type="NCBI Taxonomy" id="262724"/>
    <lineage>
        <taxon>Bacteria</taxon>
        <taxon>Thermotogati</taxon>
        <taxon>Deinococcota</taxon>
        <taxon>Deinococci</taxon>
        <taxon>Thermales</taxon>
        <taxon>Thermaceae</taxon>
        <taxon>Thermus</taxon>
    </lineage>
</organism>
<proteinExistence type="inferred from homology"/>
<comment type="function">
    <text evidence="1">Catalyzes the attachment of glutamate to tRNA(Glu) in a two-step reaction: glutamate is first activated by ATP to form Glu-AMP and then transferred to the acceptor end of tRNA(Glu).</text>
</comment>
<comment type="catalytic activity">
    <reaction evidence="1">
        <text>tRNA(Glu) + L-glutamate + ATP = L-glutamyl-tRNA(Glu) + AMP + diphosphate</text>
        <dbReference type="Rhea" id="RHEA:23540"/>
        <dbReference type="Rhea" id="RHEA-COMP:9663"/>
        <dbReference type="Rhea" id="RHEA-COMP:9680"/>
        <dbReference type="ChEBI" id="CHEBI:29985"/>
        <dbReference type="ChEBI" id="CHEBI:30616"/>
        <dbReference type="ChEBI" id="CHEBI:33019"/>
        <dbReference type="ChEBI" id="CHEBI:78442"/>
        <dbReference type="ChEBI" id="CHEBI:78520"/>
        <dbReference type="ChEBI" id="CHEBI:456215"/>
        <dbReference type="EC" id="6.1.1.17"/>
    </reaction>
</comment>
<comment type="subunit">
    <text evidence="1">Monomer.</text>
</comment>
<comment type="subcellular location">
    <subcellularLocation>
        <location evidence="1">Cytoplasm</location>
    </subcellularLocation>
</comment>
<comment type="similarity">
    <text evidence="1">Belongs to the class-I aminoacyl-tRNA synthetase family. Glutamate--tRNA ligase type 1 subfamily.</text>
</comment>
<keyword id="KW-0030">Aminoacyl-tRNA synthetase</keyword>
<keyword id="KW-0067">ATP-binding</keyword>
<keyword id="KW-0963">Cytoplasm</keyword>
<keyword id="KW-0436">Ligase</keyword>
<keyword id="KW-0547">Nucleotide-binding</keyword>
<keyword id="KW-0648">Protein biosynthesis</keyword>
<sequence length="468" mass="53940">MVVTRIAPSPTGDPHVGTAYIALFNYAWARRNGGRFIVRIEDTDRARYVPGAEERILAALKWLGLSYDEGPDVGGPHGPYRQSERLPLYQKYAEELLKRGWAYRAFETPEELEQIRKEKGGYDGRARNIPPEEAEERARRGEPHVIRLKVPRPGTTEVKDELRGVVVYDNQEIPDVVLLKSDGYPTYHLANVVDDHLMGVTDVIRAEEWLVSTPIHVLLYRAFGWEAPRFYHMPLLRNPDKTKISKRKSHTSLDWYKAEGFLPEALRNYLCLMGFSMPDGREIFTLEEFIQAFTWERVSLGGPVFDLEKLRWMNGKYIREVLSLEEVAERVKPFLREAGLSWESEAYLRRAVELMRPRFDTLKEFPEKARYLFTEDYPVSEKAQRKLEEGLPLLKELYPRLRTQEEWTEAALEALLRGFAAEKGVKLGQVAQPLRAALTGSLETPGLFEILALLGKERALRRLERALA</sequence>
<evidence type="ECO:0000255" key="1">
    <source>
        <dbReference type="HAMAP-Rule" id="MF_00022"/>
    </source>
</evidence>
<accession>Q72LI9</accession>
<protein>
    <recommendedName>
        <fullName evidence="1">Glutamate--tRNA ligase</fullName>
        <ecNumber evidence="1">6.1.1.17</ecNumber>
    </recommendedName>
    <alternativeName>
        <fullName evidence="1">Glutamyl-tRNA synthetase</fullName>
        <shortName evidence="1">GluRS</shortName>
    </alternativeName>
</protein>
<feature type="chain" id="PRO_0000119682" description="Glutamate--tRNA ligase">
    <location>
        <begin position="1"/>
        <end position="468"/>
    </location>
</feature>
<feature type="short sequence motif" description="'HIGH' region" evidence="1">
    <location>
        <begin position="8"/>
        <end position="18"/>
    </location>
</feature>
<feature type="short sequence motif" description="'KMSKS' region" evidence="1">
    <location>
        <begin position="243"/>
        <end position="247"/>
    </location>
</feature>
<feature type="binding site" evidence="1">
    <location>
        <position position="246"/>
    </location>
    <ligand>
        <name>ATP</name>
        <dbReference type="ChEBI" id="CHEBI:30616"/>
    </ligand>
</feature>
<dbReference type="EC" id="6.1.1.17" evidence="1"/>
<dbReference type="EMBL" id="AE017221">
    <property type="protein sequence ID" value="AAS80418.1"/>
    <property type="molecule type" value="Genomic_DNA"/>
</dbReference>
<dbReference type="RefSeq" id="WP_011172527.1">
    <property type="nucleotide sequence ID" value="NC_005835.1"/>
</dbReference>
<dbReference type="SMR" id="Q72LI9"/>
<dbReference type="KEGG" id="tth:TT_C0070"/>
<dbReference type="eggNOG" id="COG0008">
    <property type="taxonomic scope" value="Bacteria"/>
</dbReference>
<dbReference type="HOGENOM" id="CLU_015768_6_3_0"/>
<dbReference type="OrthoDB" id="9807503at2"/>
<dbReference type="Proteomes" id="UP000000592">
    <property type="component" value="Chromosome"/>
</dbReference>
<dbReference type="GO" id="GO:0005829">
    <property type="term" value="C:cytosol"/>
    <property type="evidence" value="ECO:0007669"/>
    <property type="project" value="TreeGrafter"/>
</dbReference>
<dbReference type="GO" id="GO:0005524">
    <property type="term" value="F:ATP binding"/>
    <property type="evidence" value="ECO:0007669"/>
    <property type="project" value="UniProtKB-UniRule"/>
</dbReference>
<dbReference type="GO" id="GO:0004818">
    <property type="term" value="F:glutamate-tRNA ligase activity"/>
    <property type="evidence" value="ECO:0007669"/>
    <property type="project" value="UniProtKB-UniRule"/>
</dbReference>
<dbReference type="GO" id="GO:0000049">
    <property type="term" value="F:tRNA binding"/>
    <property type="evidence" value="ECO:0007669"/>
    <property type="project" value="InterPro"/>
</dbReference>
<dbReference type="GO" id="GO:0008270">
    <property type="term" value="F:zinc ion binding"/>
    <property type="evidence" value="ECO:0007669"/>
    <property type="project" value="InterPro"/>
</dbReference>
<dbReference type="GO" id="GO:0006424">
    <property type="term" value="P:glutamyl-tRNA aminoacylation"/>
    <property type="evidence" value="ECO:0007669"/>
    <property type="project" value="UniProtKB-UniRule"/>
</dbReference>
<dbReference type="CDD" id="cd00808">
    <property type="entry name" value="GluRS_core"/>
    <property type="match status" value="1"/>
</dbReference>
<dbReference type="FunFam" id="3.40.50.620:FF:000045">
    <property type="entry name" value="Glutamate--tRNA ligase, mitochondrial"/>
    <property type="match status" value="1"/>
</dbReference>
<dbReference type="Gene3D" id="1.10.10.350">
    <property type="match status" value="1"/>
</dbReference>
<dbReference type="Gene3D" id="1.10.8.70">
    <property type="entry name" value="Glutamate-tRNA synthetase, class I, anticodon-binding domain 1"/>
    <property type="match status" value="1"/>
</dbReference>
<dbReference type="Gene3D" id="3.40.50.620">
    <property type="entry name" value="HUPs"/>
    <property type="match status" value="1"/>
</dbReference>
<dbReference type="HAMAP" id="MF_00022">
    <property type="entry name" value="Glu_tRNA_synth_type1"/>
    <property type="match status" value="1"/>
</dbReference>
<dbReference type="InterPro" id="IPR045462">
    <property type="entry name" value="aa-tRNA-synth_I_cd-bd"/>
</dbReference>
<dbReference type="InterPro" id="IPR020751">
    <property type="entry name" value="aa-tRNA-synth_I_codon-bd_sub2"/>
</dbReference>
<dbReference type="InterPro" id="IPR001412">
    <property type="entry name" value="aa-tRNA-synth_I_CS"/>
</dbReference>
<dbReference type="InterPro" id="IPR008925">
    <property type="entry name" value="aa_tRNA-synth_I_cd-bd_sf"/>
</dbReference>
<dbReference type="InterPro" id="IPR004527">
    <property type="entry name" value="Glu-tRNA-ligase_bac/mito"/>
</dbReference>
<dbReference type="InterPro" id="IPR020752">
    <property type="entry name" value="Glu-tRNA-synth_I_codon-bd_sub1"/>
</dbReference>
<dbReference type="InterPro" id="IPR000924">
    <property type="entry name" value="Glu/Gln-tRNA-synth"/>
</dbReference>
<dbReference type="InterPro" id="IPR020058">
    <property type="entry name" value="Glu/Gln-tRNA-synth_Ib_cat-dom"/>
</dbReference>
<dbReference type="InterPro" id="IPR049940">
    <property type="entry name" value="GluQ/Sye"/>
</dbReference>
<dbReference type="InterPro" id="IPR033910">
    <property type="entry name" value="GluRS_core"/>
</dbReference>
<dbReference type="InterPro" id="IPR014729">
    <property type="entry name" value="Rossmann-like_a/b/a_fold"/>
</dbReference>
<dbReference type="NCBIfam" id="TIGR00464">
    <property type="entry name" value="gltX_bact"/>
    <property type="match status" value="1"/>
</dbReference>
<dbReference type="PANTHER" id="PTHR43311">
    <property type="entry name" value="GLUTAMATE--TRNA LIGASE"/>
    <property type="match status" value="1"/>
</dbReference>
<dbReference type="PANTHER" id="PTHR43311:SF2">
    <property type="entry name" value="GLUTAMATE--TRNA LIGASE, MITOCHONDRIAL-RELATED"/>
    <property type="match status" value="1"/>
</dbReference>
<dbReference type="Pfam" id="PF19269">
    <property type="entry name" value="Anticodon_2"/>
    <property type="match status" value="1"/>
</dbReference>
<dbReference type="Pfam" id="PF00749">
    <property type="entry name" value="tRNA-synt_1c"/>
    <property type="match status" value="1"/>
</dbReference>
<dbReference type="PRINTS" id="PR00987">
    <property type="entry name" value="TRNASYNTHGLU"/>
</dbReference>
<dbReference type="SUPFAM" id="SSF48163">
    <property type="entry name" value="An anticodon-binding domain of class I aminoacyl-tRNA synthetases"/>
    <property type="match status" value="1"/>
</dbReference>
<dbReference type="SUPFAM" id="SSF52374">
    <property type="entry name" value="Nucleotidylyl transferase"/>
    <property type="match status" value="1"/>
</dbReference>
<dbReference type="PROSITE" id="PS00178">
    <property type="entry name" value="AA_TRNA_LIGASE_I"/>
    <property type="match status" value="1"/>
</dbReference>
<gene>
    <name evidence="1" type="primary">gltX</name>
    <name type="ordered locus">TT_C0070</name>
</gene>
<name>SYE_THET2</name>